<accession>Q9SA36</accession>
<comment type="function">
    <text evidence="1">High affinity carnitine transporter involved in the active cellular uptake of carnitine. Also transports organic cations (By similarity).</text>
</comment>
<comment type="subcellular location">
    <subcellularLocation>
        <location evidence="3">Vacuole membrane</location>
        <topology evidence="3">Multi-pass membrane protein</topology>
    </subcellularLocation>
</comment>
<comment type="tissue specificity">
    <text evidence="3">Expressed in roots and stems. In the stem of secondary inflorescences, localized to the phloem. Also present in flowers, specifically in the stamen, in the filaments and the connective, and restricted to major veins in leaves.</text>
</comment>
<comment type="induction">
    <text evidence="3">During drought and salt stress treatments.</text>
</comment>
<comment type="similarity">
    <text evidence="4">Belongs to the major facilitator (TC 2.A.1) superfamily. Organic cation transporter (TC 2.A.1.19) family.</text>
</comment>
<keyword id="KW-0067">ATP-binding</keyword>
<keyword id="KW-0325">Glycoprotein</keyword>
<keyword id="KW-0406">Ion transport</keyword>
<keyword id="KW-0472">Membrane</keyword>
<keyword id="KW-0547">Nucleotide-binding</keyword>
<keyword id="KW-1185">Reference proteome</keyword>
<keyword id="KW-0812">Transmembrane</keyword>
<keyword id="KW-1133">Transmembrane helix</keyword>
<keyword id="KW-0813">Transport</keyword>
<keyword id="KW-0926">Vacuole</keyword>
<dbReference type="EMBL" id="AC006341">
    <property type="protein sequence ID" value="AAD34689.1"/>
    <property type="molecule type" value="Genomic_DNA"/>
</dbReference>
<dbReference type="EMBL" id="CP002684">
    <property type="protein sequence ID" value="AEE29443.1"/>
    <property type="molecule type" value="Genomic_DNA"/>
</dbReference>
<dbReference type="EMBL" id="AK229354">
    <property type="protein sequence ID" value="BAF01217.1"/>
    <property type="molecule type" value="mRNA"/>
</dbReference>
<dbReference type="PIR" id="H86298">
    <property type="entry name" value="H86298"/>
</dbReference>
<dbReference type="RefSeq" id="NP_173087.1">
    <property type="nucleotide sequence ID" value="NM_101503.4"/>
</dbReference>
<dbReference type="SMR" id="Q9SA36"/>
<dbReference type="STRING" id="3702.Q9SA36"/>
<dbReference type="TCDB" id="2.A.1.19.39">
    <property type="family name" value="the major facilitator superfamily (mfs)"/>
</dbReference>
<dbReference type="GlyCosmos" id="Q9SA36">
    <property type="glycosylation" value="1 site, No reported glycans"/>
</dbReference>
<dbReference type="GlyGen" id="Q9SA36">
    <property type="glycosylation" value="1 site"/>
</dbReference>
<dbReference type="PaxDb" id="3702-AT1G16370.1"/>
<dbReference type="ProteomicsDB" id="250866"/>
<dbReference type="EnsemblPlants" id="AT1G16370.1">
    <property type="protein sequence ID" value="AT1G16370.1"/>
    <property type="gene ID" value="AT1G16370"/>
</dbReference>
<dbReference type="GeneID" id="838207"/>
<dbReference type="Gramene" id="AT1G16370.1">
    <property type="protein sequence ID" value="AT1G16370.1"/>
    <property type="gene ID" value="AT1G16370"/>
</dbReference>
<dbReference type="KEGG" id="ath:AT1G16370"/>
<dbReference type="Araport" id="AT1G16370"/>
<dbReference type="TAIR" id="AT1G16370">
    <property type="gene designation" value="OCT6"/>
</dbReference>
<dbReference type="eggNOG" id="KOG0255">
    <property type="taxonomic scope" value="Eukaryota"/>
</dbReference>
<dbReference type="HOGENOM" id="CLU_001265_33_5_1"/>
<dbReference type="InParanoid" id="Q9SA36"/>
<dbReference type="OMA" id="EHCFFSV"/>
<dbReference type="PhylomeDB" id="Q9SA36"/>
<dbReference type="PRO" id="PR:Q9SA36"/>
<dbReference type="Proteomes" id="UP000006548">
    <property type="component" value="Chromosome 1"/>
</dbReference>
<dbReference type="ExpressionAtlas" id="Q9SA36">
    <property type="expression patterns" value="baseline and differential"/>
</dbReference>
<dbReference type="GO" id="GO:0009705">
    <property type="term" value="C:plant-type vacuole membrane"/>
    <property type="evidence" value="ECO:0000314"/>
    <property type="project" value="UniProtKB"/>
</dbReference>
<dbReference type="GO" id="GO:0005524">
    <property type="term" value="F:ATP binding"/>
    <property type="evidence" value="ECO:0007669"/>
    <property type="project" value="UniProtKB-KW"/>
</dbReference>
<dbReference type="GO" id="GO:0022857">
    <property type="term" value="F:transmembrane transporter activity"/>
    <property type="evidence" value="ECO:0007669"/>
    <property type="project" value="InterPro"/>
</dbReference>
<dbReference type="GO" id="GO:0071472">
    <property type="term" value="P:cellular response to salt stress"/>
    <property type="evidence" value="ECO:0000270"/>
    <property type="project" value="UniProtKB"/>
</dbReference>
<dbReference type="GO" id="GO:0042631">
    <property type="term" value="P:cellular response to water deprivation"/>
    <property type="evidence" value="ECO:0000270"/>
    <property type="project" value="UniProtKB"/>
</dbReference>
<dbReference type="GO" id="GO:0006811">
    <property type="term" value="P:monoatomic ion transport"/>
    <property type="evidence" value="ECO:0007669"/>
    <property type="project" value="UniProtKB-KW"/>
</dbReference>
<dbReference type="CDD" id="cd17378">
    <property type="entry name" value="MFS_OCT_plant"/>
    <property type="match status" value="1"/>
</dbReference>
<dbReference type="FunFam" id="1.20.1250.20:FF:000417">
    <property type="entry name" value="Organic cation/carnitine transporter 1"/>
    <property type="match status" value="1"/>
</dbReference>
<dbReference type="Gene3D" id="1.20.1250.20">
    <property type="entry name" value="MFS general substrate transporter like domains"/>
    <property type="match status" value="1"/>
</dbReference>
<dbReference type="InterPro" id="IPR020846">
    <property type="entry name" value="MFS_dom"/>
</dbReference>
<dbReference type="InterPro" id="IPR005828">
    <property type="entry name" value="MFS_sugar_transport-like"/>
</dbReference>
<dbReference type="InterPro" id="IPR036259">
    <property type="entry name" value="MFS_trans_sf"/>
</dbReference>
<dbReference type="PANTHER" id="PTHR24064">
    <property type="entry name" value="SOLUTE CARRIER FAMILY 22 MEMBER"/>
    <property type="match status" value="1"/>
</dbReference>
<dbReference type="Pfam" id="PF00083">
    <property type="entry name" value="Sugar_tr"/>
    <property type="match status" value="1"/>
</dbReference>
<dbReference type="SUPFAM" id="SSF103473">
    <property type="entry name" value="MFS general substrate transporter"/>
    <property type="match status" value="1"/>
</dbReference>
<dbReference type="PROSITE" id="PS50850">
    <property type="entry name" value="MFS"/>
    <property type="match status" value="1"/>
</dbReference>
<feature type="chain" id="PRO_0000415362" description="Organic cation/carnitine transporter 6">
    <location>
        <begin position="1"/>
        <end position="521"/>
    </location>
</feature>
<feature type="topological domain" description="Cytoplasmic" evidence="2">
    <location>
        <begin position="1"/>
        <end position="37"/>
    </location>
</feature>
<feature type="transmembrane region" description="Helical; Name=1" evidence="2">
    <location>
        <begin position="38"/>
        <end position="58"/>
    </location>
</feature>
<feature type="topological domain" description="Extracellular" evidence="2">
    <location>
        <begin position="59"/>
        <end position="123"/>
    </location>
</feature>
<feature type="transmembrane region" description="Helical; Name=2" evidence="2">
    <location>
        <begin position="124"/>
        <end position="144"/>
    </location>
</feature>
<feature type="topological domain" description="Cytoplasmic" evidence="2">
    <location>
        <begin position="145"/>
        <end position="154"/>
    </location>
</feature>
<feature type="transmembrane region" description="Helical; Name=3" evidence="2">
    <location>
        <begin position="155"/>
        <end position="177"/>
    </location>
</feature>
<feature type="topological domain" description="Extracellular" evidence="2">
    <location>
        <begin position="178"/>
        <end position="182"/>
    </location>
</feature>
<feature type="transmembrane region" description="Helical; Name=4" evidence="2">
    <location>
        <begin position="183"/>
        <end position="200"/>
    </location>
</feature>
<feature type="topological domain" description="Cytoplasmic" evidence="2">
    <location>
        <begin position="201"/>
        <end position="213"/>
    </location>
</feature>
<feature type="transmembrane region" description="Helical; Name=5" evidence="2">
    <location>
        <begin position="214"/>
        <end position="234"/>
    </location>
</feature>
<feature type="topological domain" description="Extracellular" evidence="2">
    <location>
        <begin position="235"/>
        <end position="241"/>
    </location>
</feature>
<feature type="transmembrane region" description="Helical; Name=6" evidence="2">
    <location>
        <begin position="242"/>
        <end position="262"/>
    </location>
</feature>
<feature type="topological domain" description="Cytoplasmic" evidence="2">
    <location>
        <begin position="263"/>
        <end position="326"/>
    </location>
</feature>
<feature type="transmembrane region" description="Helical; Name=7" evidence="2">
    <location>
        <begin position="327"/>
        <end position="347"/>
    </location>
</feature>
<feature type="topological domain" description="Extracellular" evidence="2">
    <location>
        <begin position="348"/>
        <end position="356"/>
    </location>
</feature>
<feature type="transmembrane region" description="Helical; Name=8" evidence="2">
    <location>
        <begin position="357"/>
        <end position="377"/>
    </location>
</feature>
<feature type="topological domain" description="Cytoplasmic" evidence="2">
    <location>
        <begin position="378"/>
        <end position="385"/>
    </location>
</feature>
<feature type="transmembrane region" description="Helical; Name=9" evidence="2">
    <location>
        <begin position="386"/>
        <end position="406"/>
    </location>
</feature>
<feature type="topological domain" description="Extracellular" evidence="2">
    <location>
        <begin position="407"/>
        <end position="412"/>
    </location>
</feature>
<feature type="transmembrane region" description="Helical; Name=10" evidence="2">
    <location>
        <begin position="413"/>
        <end position="433"/>
    </location>
</feature>
<feature type="topological domain" description="Cytoplasmic" evidence="2">
    <location>
        <begin position="434"/>
        <end position="447"/>
    </location>
</feature>
<feature type="transmembrane region" description="Helical; Name=11" evidence="2">
    <location>
        <begin position="448"/>
        <end position="468"/>
    </location>
</feature>
<feature type="topological domain" description="Extracellular" evidence="2">
    <location>
        <begin position="469"/>
        <end position="473"/>
    </location>
</feature>
<feature type="transmembrane region" description="Helical; Name=12" evidence="2">
    <location>
        <begin position="474"/>
        <end position="494"/>
    </location>
</feature>
<feature type="topological domain" description="Cytoplasmic" evidence="2">
    <location>
        <begin position="495"/>
        <end position="521"/>
    </location>
</feature>
<feature type="binding site" evidence="2">
    <location>
        <begin position="200"/>
        <end position="207"/>
    </location>
    <ligand>
        <name>ATP</name>
        <dbReference type="ChEBI" id="CHEBI:30616"/>
    </ligand>
</feature>
<feature type="glycosylation site" description="N-linked (GlcNAc...) asparagine" evidence="2">
    <location>
        <position position="79"/>
    </location>
</feature>
<proteinExistence type="evidence at transcript level"/>
<evidence type="ECO:0000250" key="1"/>
<evidence type="ECO:0000255" key="2"/>
<evidence type="ECO:0000269" key="3">
    <source>
    </source>
</evidence>
<evidence type="ECO:0000305" key="4"/>
<name>OCT6_ARATH</name>
<gene>
    <name type="primary">OCT6</name>
    <name type="synonym">6-Oct</name>
    <name type="ordered locus">At1g16370</name>
    <name type="ORF">F3O9.17</name>
</gene>
<sequence length="521" mass="58351">MADPISEPLLSHLTDDSGVNEKTRLEALTFDKIVEQSLSDFGFWQFFQISLVGLALLFDAQQIFITVYTDAYPTWHCLNHTICDPSASDICKLPRSAWEWDGGSQGKSVISEFGLECSSSLLRGMPSSAFYIGAIVGGFFLALIPDDSLGRKKLVLFSTFAMSITSISVIFSTNVWIYTFLKFIIGFSRSQTWSYALVLISERVSTRWRPRATMIPFTLFVLGFMSLSGIAFLAQDSSWRYLYLYTSVPAVFYCIFLYLFALESPRWLHMQGKDKEAIDVLTKMSPKEKAYLESVVSKLPLKQENFEQAPTYSIKDFFFRKWAFRRILVVMIIMFGLGISYYGVPLAARDIDVNIYLSETLNALVELPTFVITPILLERFNRRSSVLVNTLLGGASGVLCFVLSILGKTEIAFAFELGTFFCARIGFNLMAVFMVEMFPTCVRSSATMMFRQALVVGGACCPLIASIGRYIPSVSFAIFGIAMSGLGMFVLILPETKGLSLCDSMEEQEKRDQAVNTSHVC</sequence>
<organism>
    <name type="scientific">Arabidopsis thaliana</name>
    <name type="common">Mouse-ear cress</name>
    <dbReference type="NCBI Taxonomy" id="3702"/>
    <lineage>
        <taxon>Eukaryota</taxon>
        <taxon>Viridiplantae</taxon>
        <taxon>Streptophyta</taxon>
        <taxon>Embryophyta</taxon>
        <taxon>Tracheophyta</taxon>
        <taxon>Spermatophyta</taxon>
        <taxon>Magnoliopsida</taxon>
        <taxon>eudicotyledons</taxon>
        <taxon>Gunneridae</taxon>
        <taxon>Pentapetalae</taxon>
        <taxon>rosids</taxon>
        <taxon>malvids</taxon>
        <taxon>Brassicales</taxon>
        <taxon>Brassicaceae</taxon>
        <taxon>Camelineae</taxon>
        <taxon>Arabidopsis</taxon>
    </lineage>
</organism>
<reference key="1">
    <citation type="journal article" date="2000" name="Nature">
        <title>Sequence and analysis of chromosome 1 of the plant Arabidopsis thaliana.</title>
        <authorList>
            <person name="Theologis A."/>
            <person name="Ecker J.R."/>
            <person name="Palm C.J."/>
            <person name="Federspiel N.A."/>
            <person name="Kaul S."/>
            <person name="White O."/>
            <person name="Alonso J."/>
            <person name="Altafi H."/>
            <person name="Araujo R."/>
            <person name="Bowman C.L."/>
            <person name="Brooks S.Y."/>
            <person name="Buehler E."/>
            <person name="Chan A."/>
            <person name="Chao Q."/>
            <person name="Chen H."/>
            <person name="Cheuk R.F."/>
            <person name="Chin C.W."/>
            <person name="Chung M.K."/>
            <person name="Conn L."/>
            <person name="Conway A.B."/>
            <person name="Conway A.R."/>
            <person name="Creasy T.H."/>
            <person name="Dewar K."/>
            <person name="Dunn P."/>
            <person name="Etgu P."/>
            <person name="Feldblyum T.V."/>
            <person name="Feng J.-D."/>
            <person name="Fong B."/>
            <person name="Fujii C.Y."/>
            <person name="Gill J.E."/>
            <person name="Goldsmith A.D."/>
            <person name="Haas B."/>
            <person name="Hansen N.F."/>
            <person name="Hughes B."/>
            <person name="Huizar L."/>
            <person name="Hunter J.L."/>
            <person name="Jenkins J."/>
            <person name="Johnson-Hopson C."/>
            <person name="Khan S."/>
            <person name="Khaykin E."/>
            <person name="Kim C.J."/>
            <person name="Koo H.L."/>
            <person name="Kremenetskaia I."/>
            <person name="Kurtz D.B."/>
            <person name="Kwan A."/>
            <person name="Lam B."/>
            <person name="Langin-Hooper S."/>
            <person name="Lee A."/>
            <person name="Lee J.M."/>
            <person name="Lenz C.A."/>
            <person name="Li J.H."/>
            <person name="Li Y.-P."/>
            <person name="Lin X."/>
            <person name="Liu S.X."/>
            <person name="Liu Z.A."/>
            <person name="Luros J.S."/>
            <person name="Maiti R."/>
            <person name="Marziali A."/>
            <person name="Militscher J."/>
            <person name="Miranda M."/>
            <person name="Nguyen M."/>
            <person name="Nierman W.C."/>
            <person name="Osborne B.I."/>
            <person name="Pai G."/>
            <person name="Peterson J."/>
            <person name="Pham P.K."/>
            <person name="Rizzo M."/>
            <person name="Rooney T."/>
            <person name="Rowley D."/>
            <person name="Sakano H."/>
            <person name="Salzberg S.L."/>
            <person name="Schwartz J.R."/>
            <person name="Shinn P."/>
            <person name="Southwick A.M."/>
            <person name="Sun H."/>
            <person name="Tallon L.J."/>
            <person name="Tambunga G."/>
            <person name="Toriumi M.J."/>
            <person name="Town C.D."/>
            <person name="Utterback T."/>
            <person name="Van Aken S."/>
            <person name="Vaysberg M."/>
            <person name="Vysotskaia V.S."/>
            <person name="Walker M."/>
            <person name="Wu D."/>
            <person name="Yu G."/>
            <person name="Fraser C.M."/>
            <person name="Venter J.C."/>
            <person name="Davis R.W."/>
        </authorList>
    </citation>
    <scope>NUCLEOTIDE SEQUENCE [LARGE SCALE GENOMIC DNA]</scope>
    <source>
        <strain>cv. Columbia</strain>
    </source>
</reference>
<reference key="2">
    <citation type="journal article" date="2017" name="Plant J.">
        <title>Araport11: a complete reannotation of the Arabidopsis thaliana reference genome.</title>
        <authorList>
            <person name="Cheng C.Y."/>
            <person name="Krishnakumar V."/>
            <person name="Chan A.P."/>
            <person name="Thibaud-Nissen F."/>
            <person name="Schobel S."/>
            <person name="Town C.D."/>
        </authorList>
    </citation>
    <scope>GENOME REANNOTATION</scope>
    <source>
        <strain>cv. Columbia</strain>
    </source>
</reference>
<reference key="3">
    <citation type="submission" date="2006-07" db="EMBL/GenBank/DDBJ databases">
        <title>Large-scale analysis of RIKEN Arabidopsis full-length (RAFL) cDNAs.</title>
        <authorList>
            <person name="Totoki Y."/>
            <person name="Seki M."/>
            <person name="Ishida J."/>
            <person name="Nakajima M."/>
            <person name="Enju A."/>
            <person name="Kamiya A."/>
            <person name="Narusaka M."/>
            <person name="Shin-i T."/>
            <person name="Nakagawa M."/>
            <person name="Sakamoto N."/>
            <person name="Oishi K."/>
            <person name="Kohara Y."/>
            <person name="Kobayashi M."/>
            <person name="Toyoda A."/>
            <person name="Sakaki Y."/>
            <person name="Sakurai T."/>
            <person name="Iida K."/>
            <person name="Akiyama K."/>
            <person name="Satou M."/>
            <person name="Toyoda T."/>
            <person name="Konagaya A."/>
            <person name="Carninci P."/>
            <person name="Kawai J."/>
            <person name="Hayashizaki Y."/>
            <person name="Shinozaki K."/>
        </authorList>
    </citation>
    <scope>NUCLEOTIDE SEQUENCE [LARGE SCALE MRNA]</scope>
    <source>
        <strain>cv. Columbia</strain>
    </source>
</reference>
<reference key="4">
    <citation type="journal article" date="2008" name="BMC Res. Notes">
        <title>Stress regulated members of the plant organic cation transporter family are localized to the vacuolar membrane.</title>
        <authorList>
            <person name="Kuefner I."/>
            <person name="Koch W."/>
        </authorList>
    </citation>
    <scope>SUBCELLULAR LOCATION</scope>
    <scope>INDUCTION BY ABIOTIC STRESS</scope>
    <scope>TISSUE SPECIFICITY</scope>
    <source>
        <strain>cv. Columbia</strain>
    </source>
</reference>
<protein>
    <recommendedName>
        <fullName>Organic cation/carnitine transporter 6</fullName>
        <shortName>AtOCT6</shortName>
    </recommendedName>
</protein>